<reference key="1">
    <citation type="journal article" date="2001" name="Proc. Natl. Acad. Sci. U.S.A.">
        <title>Complete genome sequence of Caulobacter crescentus.</title>
        <authorList>
            <person name="Nierman W.C."/>
            <person name="Feldblyum T.V."/>
            <person name="Laub M.T."/>
            <person name="Paulsen I.T."/>
            <person name="Nelson K.E."/>
            <person name="Eisen J.A."/>
            <person name="Heidelberg J.F."/>
            <person name="Alley M.R.K."/>
            <person name="Ohta N."/>
            <person name="Maddock J.R."/>
            <person name="Potocka I."/>
            <person name="Nelson W.C."/>
            <person name="Newton A."/>
            <person name="Stephens C."/>
            <person name="Phadke N.D."/>
            <person name="Ely B."/>
            <person name="DeBoy R.T."/>
            <person name="Dodson R.J."/>
            <person name="Durkin A.S."/>
            <person name="Gwinn M.L."/>
            <person name="Haft D.H."/>
            <person name="Kolonay J.F."/>
            <person name="Smit J."/>
            <person name="Craven M.B."/>
            <person name="Khouri H.M."/>
            <person name="Shetty J."/>
            <person name="Berry K.J."/>
            <person name="Utterback T.R."/>
            <person name="Tran K."/>
            <person name="Wolf A.M."/>
            <person name="Vamathevan J.J."/>
            <person name="Ermolaeva M.D."/>
            <person name="White O."/>
            <person name="Salzberg S.L."/>
            <person name="Venter J.C."/>
            <person name="Shapiro L."/>
            <person name="Fraser C.M."/>
        </authorList>
    </citation>
    <scope>NUCLEOTIDE SEQUENCE [LARGE SCALE GENOMIC DNA]</scope>
    <source>
        <strain>ATCC 19089 / CIP 103742 / CB 15</strain>
    </source>
</reference>
<sequence length="162" mass="18727">MTPRKPFWQTKTLAEMTVPEWESLCDGCGLCCLVRFEDEDTGEIIPTRVHCQLFDERLCRCKDYPNRKKTVPDCIKLTPYNIEDLEWMPPSCAYRRLHEGKDLPLWHPLVTGDPESTHKAGVSIRNQTVSELSFKDAEDAMDFVATDLMRDRGDDLYEPEEG</sequence>
<protein>
    <recommendedName>
        <fullName evidence="1">UPF0260 protein CC_3276</fullName>
    </recommendedName>
</protein>
<accession>Q9A3C8</accession>
<dbReference type="EMBL" id="AE005673">
    <property type="protein sequence ID" value="AAK25238.1"/>
    <property type="molecule type" value="Genomic_DNA"/>
</dbReference>
<dbReference type="PIR" id="B87655">
    <property type="entry name" value="B87655"/>
</dbReference>
<dbReference type="RefSeq" id="NP_422070.1">
    <property type="nucleotide sequence ID" value="NC_002696.2"/>
</dbReference>
<dbReference type="RefSeq" id="WP_010921108.1">
    <property type="nucleotide sequence ID" value="NC_002696.2"/>
</dbReference>
<dbReference type="STRING" id="190650.CC_3276"/>
<dbReference type="DNASU" id="943369"/>
<dbReference type="EnsemblBacteria" id="AAK25238">
    <property type="protein sequence ID" value="AAK25238"/>
    <property type="gene ID" value="CC_3276"/>
</dbReference>
<dbReference type="KEGG" id="ccr:CC_3276"/>
<dbReference type="PATRIC" id="fig|190650.5.peg.3282"/>
<dbReference type="eggNOG" id="COG2983">
    <property type="taxonomic scope" value="Bacteria"/>
</dbReference>
<dbReference type="HOGENOM" id="CLU_109769_0_1_5"/>
<dbReference type="BioCyc" id="CAULO:CC3276-MONOMER"/>
<dbReference type="Proteomes" id="UP000001816">
    <property type="component" value="Chromosome"/>
</dbReference>
<dbReference type="HAMAP" id="MF_00676">
    <property type="entry name" value="UPF0260"/>
    <property type="match status" value="1"/>
</dbReference>
<dbReference type="InterPro" id="IPR005358">
    <property type="entry name" value="Puta_zinc/iron-chelating_dom"/>
</dbReference>
<dbReference type="InterPro" id="IPR008228">
    <property type="entry name" value="UCP006173"/>
</dbReference>
<dbReference type="NCBIfam" id="NF003501">
    <property type="entry name" value="PRK05170.1-5"/>
    <property type="match status" value="1"/>
</dbReference>
<dbReference type="NCBIfam" id="NF003507">
    <property type="entry name" value="PRK05170.2-5"/>
    <property type="match status" value="1"/>
</dbReference>
<dbReference type="PANTHER" id="PTHR37421">
    <property type="entry name" value="UPF0260 PROTEIN YCGN"/>
    <property type="match status" value="1"/>
</dbReference>
<dbReference type="PANTHER" id="PTHR37421:SF1">
    <property type="entry name" value="UPF0260 PROTEIN YCGN"/>
    <property type="match status" value="1"/>
</dbReference>
<dbReference type="Pfam" id="PF03692">
    <property type="entry name" value="CxxCxxCC"/>
    <property type="match status" value="1"/>
</dbReference>
<dbReference type="PIRSF" id="PIRSF006173">
    <property type="entry name" value="UCP006173"/>
    <property type="match status" value="1"/>
</dbReference>
<organism>
    <name type="scientific">Caulobacter vibrioides (strain ATCC 19089 / CIP 103742 / CB 15)</name>
    <name type="common">Caulobacter crescentus</name>
    <dbReference type="NCBI Taxonomy" id="190650"/>
    <lineage>
        <taxon>Bacteria</taxon>
        <taxon>Pseudomonadati</taxon>
        <taxon>Pseudomonadota</taxon>
        <taxon>Alphaproteobacteria</taxon>
        <taxon>Caulobacterales</taxon>
        <taxon>Caulobacteraceae</taxon>
        <taxon>Caulobacter</taxon>
    </lineage>
</organism>
<gene>
    <name type="ordered locus">CC_3276</name>
</gene>
<evidence type="ECO:0000255" key="1">
    <source>
        <dbReference type="HAMAP-Rule" id="MF_00676"/>
    </source>
</evidence>
<proteinExistence type="inferred from homology"/>
<comment type="similarity">
    <text evidence="1">Belongs to the UPF0260 family.</text>
</comment>
<keyword id="KW-1185">Reference proteome</keyword>
<feature type="chain" id="PRO_0000214578" description="UPF0260 protein CC_3276">
    <location>
        <begin position="1"/>
        <end position="162"/>
    </location>
</feature>
<name>Y3276_CAUVC</name>